<proteinExistence type="evidence at protein level"/>
<gene>
    <name evidence="1" type="primary">lsrK</name>
    <name type="synonym">ydeV</name>
    <name type="ordered locus">b1511</name>
    <name type="ordered locus">JW1504</name>
</gene>
<organism>
    <name type="scientific">Escherichia coli (strain K12)</name>
    <dbReference type="NCBI Taxonomy" id="83333"/>
    <lineage>
        <taxon>Bacteria</taxon>
        <taxon>Pseudomonadati</taxon>
        <taxon>Pseudomonadota</taxon>
        <taxon>Gammaproteobacteria</taxon>
        <taxon>Enterobacterales</taxon>
        <taxon>Enterobacteriaceae</taxon>
        <taxon>Escherichia</taxon>
    </lineage>
</organism>
<feature type="chain" id="PRO_0000059566" description="Autoinducer-2 kinase">
    <location>
        <begin position="1"/>
        <end position="530"/>
    </location>
</feature>
<feature type="sequence conflict" description="In Ref. 1." evidence="5" ref="1">
    <original>PDPEKH</original>
    <variation>TRPGKA</variation>
    <location>
        <begin position="490"/>
        <end position="495"/>
    </location>
</feature>
<feature type="strand" evidence="7">
    <location>
        <begin position="13"/>
        <end position="19"/>
    </location>
</feature>
<feature type="strand" evidence="7">
    <location>
        <begin position="24"/>
        <end position="29"/>
    </location>
</feature>
<feature type="strand" evidence="7">
    <location>
        <begin position="35"/>
        <end position="41"/>
    </location>
</feature>
<feature type="helix" evidence="7">
    <location>
        <begin position="59"/>
        <end position="77"/>
    </location>
</feature>
<feature type="helix" evidence="7">
    <location>
        <begin position="81"/>
        <end position="83"/>
    </location>
</feature>
<feature type="strand" evidence="7">
    <location>
        <begin position="84"/>
        <end position="91"/>
    </location>
</feature>
<feature type="strand" evidence="7">
    <location>
        <begin position="96"/>
        <end position="99"/>
    </location>
</feature>
<feature type="helix" evidence="7">
    <location>
        <begin position="101"/>
        <end position="103"/>
    </location>
</feature>
<feature type="strand" evidence="7">
    <location>
        <begin position="105"/>
        <end position="109"/>
    </location>
</feature>
<feature type="helix" evidence="7">
    <location>
        <begin position="114"/>
        <end position="116"/>
    </location>
</feature>
<feature type="helix" evidence="7">
    <location>
        <begin position="117"/>
        <end position="129"/>
    </location>
</feature>
<feature type="helix" evidence="7">
    <location>
        <begin position="131"/>
        <end position="139"/>
    </location>
</feature>
<feature type="turn" evidence="7">
    <location>
        <begin position="143"/>
        <end position="145"/>
    </location>
</feature>
<feature type="helix" evidence="7">
    <location>
        <begin position="148"/>
        <end position="157"/>
    </location>
</feature>
<feature type="helix" evidence="7">
    <location>
        <begin position="159"/>
        <end position="162"/>
    </location>
</feature>
<feature type="strand" evidence="7">
    <location>
        <begin position="167"/>
        <end position="170"/>
    </location>
</feature>
<feature type="helix" evidence="7">
    <location>
        <begin position="171"/>
        <end position="180"/>
    </location>
</feature>
<feature type="helix" evidence="7">
    <location>
        <begin position="187"/>
        <end position="190"/>
    </location>
</feature>
<feature type="helix" evidence="7">
    <location>
        <begin position="191"/>
        <end position="193"/>
    </location>
</feature>
<feature type="turn" evidence="7">
    <location>
        <begin position="198"/>
        <end position="201"/>
    </location>
</feature>
<feature type="helix" evidence="7">
    <location>
        <begin position="205"/>
        <end position="211"/>
    </location>
</feature>
<feature type="helix" evidence="7">
    <location>
        <begin position="215"/>
        <end position="218"/>
    </location>
</feature>
<feature type="strand" evidence="7">
    <location>
        <begin position="226"/>
        <end position="230"/>
    </location>
</feature>
<feature type="helix" evidence="7">
    <location>
        <begin position="233"/>
        <end position="239"/>
    </location>
</feature>
<feature type="strand" evidence="7">
    <location>
        <begin position="246"/>
        <end position="252"/>
    </location>
</feature>
<feature type="helix" evidence="7">
    <location>
        <begin position="253"/>
        <end position="260"/>
    </location>
</feature>
<feature type="strand" evidence="7">
    <location>
        <begin position="269"/>
        <end position="285"/>
    </location>
</feature>
<feature type="strand" evidence="7">
    <location>
        <begin position="294"/>
        <end position="298"/>
    </location>
</feature>
<feature type="strand" evidence="7">
    <location>
        <begin position="305"/>
        <end position="311"/>
    </location>
</feature>
<feature type="helix" evidence="7">
    <location>
        <begin position="315"/>
        <end position="325"/>
    </location>
</feature>
<feature type="helix" evidence="7">
    <location>
        <begin position="327"/>
        <end position="336"/>
    </location>
</feature>
<feature type="helix" evidence="7">
    <location>
        <begin position="340"/>
        <end position="350"/>
    </location>
</feature>
<feature type="helix" evidence="7">
    <location>
        <begin position="355"/>
        <end position="357"/>
    </location>
</feature>
<feature type="strand" evidence="7">
    <location>
        <begin position="359"/>
        <end position="361"/>
    </location>
</feature>
<feature type="strand" evidence="7">
    <location>
        <begin position="377"/>
        <end position="380"/>
    </location>
</feature>
<feature type="turn" evidence="7">
    <location>
        <begin position="385"/>
        <end position="387"/>
    </location>
</feature>
<feature type="helix" evidence="7">
    <location>
        <begin position="390"/>
        <end position="416"/>
    </location>
</feature>
<feature type="strand" evidence="7">
    <location>
        <begin position="423"/>
        <end position="428"/>
    </location>
</feature>
<feature type="helix" evidence="7">
    <location>
        <begin position="429"/>
        <end position="431"/>
    </location>
</feature>
<feature type="helix" evidence="7">
    <location>
        <begin position="433"/>
        <end position="443"/>
    </location>
</feature>
<feature type="strand" evidence="7">
    <location>
        <begin position="447"/>
        <end position="451"/>
    </location>
</feature>
<feature type="helix" evidence="7">
    <location>
        <begin position="456"/>
        <end position="467"/>
    </location>
</feature>
<feature type="strand" evidence="7">
    <location>
        <begin position="470"/>
        <end position="472"/>
    </location>
</feature>
<feature type="helix" evidence="7">
    <location>
        <begin position="474"/>
        <end position="481"/>
    </location>
</feature>
<feature type="strand" evidence="7">
    <location>
        <begin position="484"/>
        <end position="488"/>
    </location>
</feature>
<feature type="helix" evidence="7">
    <location>
        <begin position="492"/>
        <end position="501"/>
    </location>
</feature>
<name>LSRK_ECOLI</name>
<dbReference type="EC" id="2.7.1.189" evidence="1"/>
<dbReference type="EMBL" id="U00096">
    <property type="protein sequence ID" value="AAC74584.1"/>
    <property type="molecule type" value="Genomic_DNA"/>
</dbReference>
<dbReference type="EMBL" id="AP009048">
    <property type="protein sequence ID" value="BAA15191.1"/>
    <property type="molecule type" value="Genomic_DNA"/>
</dbReference>
<dbReference type="EMBL" id="S82185">
    <property type="protein sequence ID" value="AAC17184.1"/>
    <property type="molecule type" value="mRNA"/>
</dbReference>
<dbReference type="PIR" id="B64905">
    <property type="entry name" value="B64905"/>
</dbReference>
<dbReference type="RefSeq" id="NP_416028.3">
    <property type="nucleotide sequence ID" value="NC_000913.3"/>
</dbReference>
<dbReference type="RefSeq" id="WP_000113108.1">
    <property type="nucleotide sequence ID" value="NZ_SSZK01000001.1"/>
</dbReference>
<dbReference type="PDB" id="5YA0">
    <property type="method" value="X-ray"/>
    <property type="resolution" value="3.00 A"/>
    <property type="chains" value="A/B=1-530"/>
</dbReference>
<dbReference type="PDB" id="5YA1">
    <property type="method" value="X-ray"/>
    <property type="resolution" value="2.70 A"/>
    <property type="chains" value="A/B=1-530"/>
</dbReference>
<dbReference type="PDB" id="5YA2">
    <property type="method" value="X-ray"/>
    <property type="resolution" value="2.70 A"/>
    <property type="chains" value="A/B=1-530"/>
</dbReference>
<dbReference type="PDBsum" id="5YA0"/>
<dbReference type="PDBsum" id="5YA1"/>
<dbReference type="PDBsum" id="5YA2"/>
<dbReference type="SMR" id="P77432"/>
<dbReference type="BioGRID" id="4260224">
    <property type="interactions" value="26"/>
</dbReference>
<dbReference type="DIP" id="DIP-11687N"/>
<dbReference type="FunCoup" id="P77432">
    <property type="interactions" value="110"/>
</dbReference>
<dbReference type="IntAct" id="P77432">
    <property type="interactions" value="13"/>
</dbReference>
<dbReference type="STRING" id="511145.b1511"/>
<dbReference type="jPOST" id="P77432"/>
<dbReference type="PaxDb" id="511145-b1511"/>
<dbReference type="EnsemblBacteria" id="AAC74584">
    <property type="protein sequence ID" value="AAC74584"/>
    <property type="gene ID" value="b1511"/>
</dbReference>
<dbReference type="GeneID" id="946069"/>
<dbReference type="KEGG" id="ecj:JW1504"/>
<dbReference type="KEGG" id="eco:b1511"/>
<dbReference type="KEGG" id="ecoc:C3026_08740"/>
<dbReference type="PATRIC" id="fig|1411691.4.peg.756"/>
<dbReference type="EchoBASE" id="EB3565"/>
<dbReference type="eggNOG" id="COG1070">
    <property type="taxonomic scope" value="Bacteria"/>
</dbReference>
<dbReference type="HOGENOM" id="CLU_009281_3_4_6"/>
<dbReference type="InParanoid" id="P77432"/>
<dbReference type="OMA" id="SDAMHFK"/>
<dbReference type="OrthoDB" id="9805576at2"/>
<dbReference type="PhylomeDB" id="P77432"/>
<dbReference type="BioCyc" id="EcoCyc:G6798-MONOMER"/>
<dbReference type="BioCyc" id="MetaCyc:G6798-MONOMER"/>
<dbReference type="BRENDA" id="2.7.1.189">
    <property type="organism ID" value="2026"/>
</dbReference>
<dbReference type="PHI-base" id="PHI:9990"/>
<dbReference type="PRO" id="PR:P77432"/>
<dbReference type="Proteomes" id="UP000000625">
    <property type="component" value="Chromosome"/>
</dbReference>
<dbReference type="GO" id="GO:0005737">
    <property type="term" value="C:cytoplasm"/>
    <property type="evidence" value="ECO:0007669"/>
    <property type="project" value="UniProtKB-SubCell"/>
</dbReference>
<dbReference type="GO" id="GO:0071518">
    <property type="term" value="F:autoinducer-2 kinase activity"/>
    <property type="evidence" value="ECO:0000314"/>
    <property type="project" value="EcoCyc"/>
</dbReference>
<dbReference type="GO" id="GO:0005975">
    <property type="term" value="P:carbohydrate metabolic process"/>
    <property type="evidence" value="ECO:0007669"/>
    <property type="project" value="InterPro"/>
</dbReference>
<dbReference type="GO" id="GO:0009372">
    <property type="term" value="P:quorum sensing"/>
    <property type="evidence" value="ECO:0000315"/>
    <property type="project" value="EcoCyc"/>
</dbReference>
<dbReference type="GO" id="GO:0044010">
    <property type="term" value="P:single-species biofilm formation"/>
    <property type="evidence" value="ECO:0000315"/>
    <property type="project" value="EcoCyc"/>
</dbReference>
<dbReference type="CDD" id="cd07775">
    <property type="entry name" value="ASKHA_NBD_FGGY_AI-2K"/>
    <property type="match status" value="1"/>
</dbReference>
<dbReference type="FunFam" id="3.30.420.40:FF:000155">
    <property type="entry name" value="Autoinducer-2 kinase"/>
    <property type="match status" value="1"/>
</dbReference>
<dbReference type="FunFam" id="3.30.420.40:FF:000160">
    <property type="entry name" value="Autoinducer-2 kinase"/>
    <property type="match status" value="1"/>
</dbReference>
<dbReference type="Gene3D" id="3.30.420.40">
    <property type="match status" value="2"/>
</dbReference>
<dbReference type="HAMAP" id="MF_02053">
    <property type="entry name" value="LsrK"/>
    <property type="match status" value="1"/>
</dbReference>
<dbReference type="InterPro" id="IPR033676">
    <property type="entry name" value="AI-2_kinase"/>
</dbReference>
<dbReference type="InterPro" id="IPR043129">
    <property type="entry name" value="ATPase_NBD"/>
</dbReference>
<dbReference type="InterPro" id="IPR000577">
    <property type="entry name" value="Carb_kinase_FGGY"/>
</dbReference>
<dbReference type="InterPro" id="IPR018485">
    <property type="entry name" value="FGGY_C"/>
</dbReference>
<dbReference type="InterPro" id="IPR050406">
    <property type="entry name" value="FGGY_Carb_Kinase"/>
</dbReference>
<dbReference type="InterPro" id="IPR018484">
    <property type="entry name" value="FGGY_N"/>
</dbReference>
<dbReference type="NCBIfam" id="NF008187">
    <property type="entry name" value="PRK10939.1"/>
    <property type="match status" value="1"/>
</dbReference>
<dbReference type="PANTHER" id="PTHR43095:SF1">
    <property type="entry name" value="AUTOINDUCER-2 KINASE"/>
    <property type="match status" value="1"/>
</dbReference>
<dbReference type="PANTHER" id="PTHR43095">
    <property type="entry name" value="SUGAR KINASE"/>
    <property type="match status" value="1"/>
</dbReference>
<dbReference type="Pfam" id="PF02782">
    <property type="entry name" value="FGGY_C"/>
    <property type="match status" value="1"/>
</dbReference>
<dbReference type="Pfam" id="PF00370">
    <property type="entry name" value="FGGY_N"/>
    <property type="match status" value="1"/>
</dbReference>
<dbReference type="PIRSF" id="PIRSF000538">
    <property type="entry name" value="GlpK"/>
    <property type="match status" value="1"/>
</dbReference>
<dbReference type="SUPFAM" id="SSF53067">
    <property type="entry name" value="Actin-like ATPase domain"/>
    <property type="match status" value="2"/>
</dbReference>
<evidence type="ECO:0000255" key="1">
    <source>
        <dbReference type="HAMAP-Rule" id="MF_02053"/>
    </source>
</evidence>
<evidence type="ECO:0000269" key="2">
    <source>
    </source>
</evidence>
<evidence type="ECO:0000269" key="3">
    <source>
    </source>
</evidence>
<evidence type="ECO:0000269" key="4">
    <source>
    </source>
</evidence>
<evidence type="ECO:0000305" key="5"/>
<evidence type="ECO:0000305" key="6">
    <source>
    </source>
</evidence>
<evidence type="ECO:0007829" key="7">
    <source>
        <dbReference type="PDB" id="5YA1"/>
    </source>
</evidence>
<protein>
    <recommendedName>
        <fullName evidence="1">Autoinducer-2 kinase</fullName>
        <shortName evidence="1">AI-2 kinase</shortName>
        <ecNumber evidence="1">2.7.1.189</ecNumber>
    </recommendedName>
</protein>
<reference key="1">
    <citation type="journal article" date="1996" name="DNA Res.">
        <title>A 570-kb DNA sequence of the Escherichia coli K-12 genome corresponding to the 28.0-40.1 min region on the linkage map.</title>
        <authorList>
            <person name="Aiba H."/>
            <person name="Baba T."/>
            <person name="Fujita K."/>
            <person name="Hayashi K."/>
            <person name="Inada T."/>
            <person name="Isono K."/>
            <person name="Itoh T."/>
            <person name="Kasai H."/>
            <person name="Kashimoto K."/>
            <person name="Kimura S."/>
            <person name="Kitakawa M."/>
            <person name="Kitagawa M."/>
            <person name="Makino K."/>
            <person name="Miki T."/>
            <person name="Mizobuchi K."/>
            <person name="Mori H."/>
            <person name="Mori T."/>
            <person name="Motomura K."/>
            <person name="Nakade S."/>
            <person name="Nakamura Y."/>
            <person name="Nashimoto H."/>
            <person name="Nishio Y."/>
            <person name="Oshima T."/>
            <person name="Saito N."/>
            <person name="Sampei G."/>
            <person name="Seki Y."/>
            <person name="Sivasundaram S."/>
            <person name="Tagami H."/>
            <person name="Takeda J."/>
            <person name="Takemoto K."/>
            <person name="Takeuchi Y."/>
            <person name="Wada C."/>
            <person name="Yamamoto Y."/>
            <person name="Horiuchi T."/>
        </authorList>
    </citation>
    <scope>NUCLEOTIDE SEQUENCE [LARGE SCALE GENOMIC DNA]</scope>
    <source>
        <strain>K12 / W3110 / ATCC 27325 / DSM 5911</strain>
    </source>
</reference>
<reference key="2">
    <citation type="journal article" date="1997" name="Science">
        <title>The complete genome sequence of Escherichia coli K-12.</title>
        <authorList>
            <person name="Blattner F.R."/>
            <person name="Plunkett G. III"/>
            <person name="Bloch C.A."/>
            <person name="Perna N.T."/>
            <person name="Burland V."/>
            <person name="Riley M."/>
            <person name="Collado-Vides J."/>
            <person name="Glasner J.D."/>
            <person name="Rode C.K."/>
            <person name="Mayhew G.F."/>
            <person name="Gregor J."/>
            <person name="Davis N.W."/>
            <person name="Kirkpatrick H.A."/>
            <person name="Goeden M.A."/>
            <person name="Rose D.J."/>
            <person name="Mau B."/>
            <person name="Shao Y."/>
        </authorList>
    </citation>
    <scope>NUCLEOTIDE SEQUENCE [LARGE SCALE GENOMIC DNA]</scope>
    <source>
        <strain>K12 / MG1655 / ATCC 47076</strain>
    </source>
</reference>
<reference key="3">
    <citation type="journal article" date="2006" name="Mol. Syst. Biol.">
        <title>Highly accurate genome sequences of Escherichia coli K-12 strains MG1655 and W3110.</title>
        <authorList>
            <person name="Hayashi K."/>
            <person name="Morooka N."/>
            <person name="Yamamoto Y."/>
            <person name="Fujita K."/>
            <person name="Isono K."/>
            <person name="Choi S."/>
            <person name="Ohtsubo E."/>
            <person name="Baba T."/>
            <person name="Wanner B.L."/>
            <person name="Mori H."/>
            <person name="Horiuchi T."/>
        </authorList>
    </citation>
    <scope>NUCLEOTIDE SEQUENCE [LARGE SCALE GENOMIC DNA]</scope>
    <source>
        <strain>K12 / W3110 / ATCC 27325 / DSM 5911</strain>
    </source>
</reference>
<reference key="4">
    <citation type="journal article" date="1996" name="Oncogene">
        <title>Identification of a novel Bcl-2 related gene, BRAG-1, in human glioma.</title>
        <authorList>
            <person name="Das R."/>
            <person name="Reddy E.P."/>
            <person name="Chatterjee D."/>
            <person name="Andrews D.W."/>
        </authorList>
    </citation>
    <scope>NUCLEOTIDE SEQUENCE [GENOMIC DNA] OF 182-495</scope>
</reference>
<reference key="5">
    <citation type="journal article" date="2005" name="J. Bacteriol.">
        <title>Regulation of uptake and processing of the quorum-sensing autoinducer AI-2 in Escherichia coli.</title>
        <authorList>
            <person name="Xavier K.B."/>
            <person name="Bassler B.L."/>
        </authorList>
    </citation>
    <scope>FUNCTION</scope>
    <source>
        <strain>K12 / MG1655 / ATCC 47076</strain>
    </source>
</reference>
<reference key="6">
    <citation type="journal article" date="2007" name="J. Bacteriol.">
        <title>Quorum sensing in Escherichia coli is signaled by AI-2/LsrR: effects on small RNA and biofilm architecture.</title>
        <authorList>
            <person name="Li J."/>
            <person name="Attila C."/>
            <person name="Wang L."/>
            <person name="Wood T.K."/>
            <person name="Valdes J.J."/>
            <person name="Bentley W.E."/>
        </authorList>
    </citation>
    <scope>FUNCTION IN REGULATION</scope>
</reference>
<reference key="7">
    <citation type="journal article" date="2010" name="ACS Chem. Biol.">
        <title>Cross species quorum quenching using a native AI-2 processing enzyme.</title>
        <authorList>
            <person name="Roy V."/>
            <person name="Fernandes R."/>
            <person name="Tsao C.Y."/>
            <person name="Bentley W.E."/>
        </authorList>
    </citation>
    <scope>FUNCTION</scope>
    <source>
        <strain>K12 / W3110 / ATCC 27325 / DSM 5911</strain>
    </source>
</reference>
<keyword id="KW-0002">3D-structure</keyword>
<keyword id="KW-0963">Cytoplasm</keyword>
<keyword id="KW-0418">Kinase</keyword>
<keyword id="KW-1185">Reference proteome</keyword>
<keyword id="KW-0808">Transferase</keyword>
<sequence>MARLFTLSESKYYLMALDAGTGSIRAVIFDLEGNQIAVGQAEWRHLAVPDVPGSMEFDLNKNWQLACECMRQALHNAGIAPEYIAAVSACSMREGIVLYNNEGAPIWACANVDARAAREVSELKELHNNTFENEVYRATGQTLALSAIPRLLWLAHHRSDIYRQASTITMISDWLAYMLSGELAVDPSNAGTTGLLDLTTRDWKPALLDMAGLRADILSPVKETGTLLGVVSSQAAELCGLKAGTPVVVGGGDVQLGCLGLGVVRPAQTAVLGGTFWQQVVNLAAPVTDPEMNVRVNPHVIPGMVQAESISFFTGLTMRWFRDAFCAEEKLIAERLGIDTYTLLEEMASRVPPGSWGVMPIFSDRMRFKTWYHAAPSFINLSIDPDKCNKATLFRALEENAAIVSACNLQQIADFSNIHPSSLVFAGGGSKGKLWSQILADVSGLPVNIPVVKEATALGCAIAAGVGAGIFSSMAETGERLVRWERTHTPDPEKHELYQDSRDKWQAVYQDQLGLVDHGLTTSLWKAPGL</sequence>
<comment type="function">
    <text evidence="2 3 4">Catalyzes the phosphorylation of autoinducer-2 (AI-2) to phospho-AI-2, which subsequently inactivates the transcriptional regulator LsrR and leads to the transcription of the lsr operon. Phosphorylates the ring-open form of (S)-4,5-dihydroxypentane-2,3-dione (DPD), which is the precursor to all AI-2 signaling molecules, at the C5 position. Required for the regulation of the lsr operon and many other genes.</text>
</comment>
<comment type="catalytic activity">
    <reaction evidence="1">
        <text>(S)-4,5-dihydroxypentane-2,3-dione + ATP = (2S)-2-hydroxy-3,4-dioxopentyl phosphate + ADP + H(+)</text>
        <dbReference type="Rhea" id="RHEA:15377"/>
        <dbReference type="ChEBI" id="CHEBI:15378"/>
        <dbReference type="ChEBI" id="CHEBI:29484"/>
        <dbReference type="ChEBI" id="CHEBI:30616"/>
        <dbReference type="ChEBI" id="CHEBI:71677"/>
        <dbReference type="ChEBI" id="CHEBI:456216"/>
        <dbReference type="EC" id="2.7.1.189"/>
    </reaction>
</comment>
<comment type="subcellular location">
    <subcellularLocation>
        <location evidence="1">Cytoplasm</location>
    </subcellularLocation>
</comment>
<comment type="similarity">
    <text evidence="1">Belongs to the FGGY kinase family.</text>
</comment>
<comment type="caution">
    <text evidence="6">Was originally thought to originate from human and was called BRAG1 (brain-related apoptosis gene 1) with a proposed role in apoptosis (PubMed:8649811). The DNA sequence of the region sequenced is more than 99% identical to that of this E.coli gene. Furthermore the claim of an 'extensive similarity to the Bcl-2 family of genes' is not correct.</text>
</comment>
<accession>P77432</accession>
<accession>Q99894</accession>